<keyword id="KW-0963">Cytoplasm</keyword>
<keyword id="KW-0255">Endonuclease</keyword>
<keyword id="KW-0378">Hydrolase</keyword>
<keyword id="KW-0464">Manganese</keyword>
<keyword id="KW-0479">Metal-binding</keyword>
<keyword id="KW-0540">Nuclease</keyword>
<proteinExistence type="inferred from homology"/>
<organism>
    <name type="scientific">Brucella melitensis biotype 2 (strain ATCC 23457)</name>
    <dbReference type="NCBI Taxonomy" id="546272"/>
    <lineage>
        <taxon>Bacteria</taxon>
        <taxon>Pseudomonadati</taxon>
        <taxon>Pseudomonadota</taxon>
        <taxon>Alphaproteobacteria</taxon>
        <taxon>Hyphomicrobiales</taxon>
        <taxon>Brucellaceae</taxon>
        <taxon>Brucella/Ochrobactrum group</taxon>
        <taxon>Brucella</taxon>
    </lineage>
</organism>
<protein>
    <recommendedName>
        <fullName evidence="1">Ribonuclease HII</fullName>
        <shortName evidence="1">RNase HII</shortName>
        <ecNumber evidence="1">3.1.26.4</ecNumber>
    </recommendedName>
</protein>
<accession>C0RH97</accession>
<dbReference type="EC" id="3.1.26.4" evidence="1"/>
<dbReference type="EMBL" id="CP001488">
    <property type="protein sequence ID" value="ACO00205.1"/>
    <property type="molecule type" value="Genomic_DNA"/>
</dbReference>
<dbReference type="RefSeq" id="WP_004683016.1">
    <property type="nucleotide sequence ID" value="NC_012441.1"/>
</dbReference>
<dbReference type="SMR" id="C0RH97"/>
<dbReference type="KEGG" id="bmi:BMEA_A0420"/>
<dbReference type="HOGENOM" id="CLU_036532_3_2_5"/>
<dbReference type="Proteomes" id="UP000001748">
    <property type="component" value="Chromosome I"/>
</dbReference>
<dbReference type="GO" id="GO:0005737">
    <property type="term" value="C:cytoplasm"/>
    <property type="evidence" value="ECO:0007669"/>
    <property type="project" value="UniProtKB-SubCell"/>
</dbReference>
<dbReference type="GO" id="GO:0032299">
    <property type="term" value="C:ribonuclease H2 complex"/>
    <property type="evidence" value="ECO:0007669"/>
    <property type="project" value="TreeGrafter"/>
</dbReference>
<dbReference type="GO" id="GO:0030145">
    <property type="term" value="F:manganese ion binding"/>
    <property type="evidence" value="ECO:0007669"/>
    <property type="project" value="UniProtKB-UniRule"/>
</dbReference>
<dbReference type="GO" id="GO:0003723">
    <property type="term" value="F:RNA binding"/>
    <property type="evidence" value="ECO:0007669"/>
    <property type="project" value="InterPro"/>
</dbReference>
<dbReference type="GO" id="GO:0004523">
    <property type="term" value="F:RNA-DNA hybrid ribonuclease activity"/>
    <property type="evidence" value="ECO:0007669"/>
    <property type="project" value="UniProtKB-UniRule"/>
</dbReference>
<dbReference type="GO" id="GO:0043137">
    <property type="term" value="P:DNA replication, removal of RNA primer"/>
    <property type="evidence" value="ECO:0007669"/>
    <property type="project" value="TreeGrafter"/>
</dbReference>
<dbReference type="GO" id="GO:0006298">
    <property type="term" value="P:mismatch repair"/>
    <property type="evidence" value="ECO:0007669"/>
    <property type="project" value="TreeGrafter"/>
</dbReference>
<dbReference type="CDD" id="cd07182">
    <property type="entry name" value="RNase_HII_bacteria_HII_like"/>
    <property type="match status" value="1"/>
</dbReference>
<dbReference type="Gene3D" id="3.30.420.10">
    <property type="entry name" value="Ribonuclease H-like superfamily/Ribonuclease H"/>
    <property type="match status" value="1"/>
</dbReference>
<dbReference type="HAMAP" id="MF_00052_B">
    <property type="entry name" value="RNase_HII_B"/>
    <property type="match status" value="1"/>
</dbReference>
<dbReference type="InterPro" id="IPR022898">
    <property type="entry name" value="RNase_HII"/>
</dbReference>
<dbReference type="InterPro" id="IPR001352">
    <property type="entry name" value="RNase_HII/HIII"/>
</dbReference>
<dbReference type="InterPro" id="IPR024567">
    <property type="entry name" value="RNase_HII/HIII_dom"/>
</dbReference>
<dbReference type="InterPro" id="IPR012337">
    <property type="entry name" value="RNaseH-like_sf"/>
</dbReference>
<dbReference type="InterPro" id="IPR036397">
    <property type="entry name" value="RNaseH_sf"/>
</dbReference>
<dbReference type="NCBIfam" id="NF000595">
    <property type="entry name" value="PRK00015.1-3"/>
    <property type="match status" value="1"/>
</dbReference>
<dbReference type="PANTHER" id="PTHR10954">
    <property type="entry name" value="RIBONUCLEASE H2 SUBUNIT A"/>
    <property type="match status" value="1"/>
</dbReference>
<dbReference type="PANTHER" id="PTHR10954:SF18">
    <property type="entry name" value="RIBONUCLEASE HII"/>
    <property type="match status" value="1"/>
</dbReference>
<dbReference type="Pfam" id="PF01351">
    <property type="entry name" value="RNase_HII"/>
    <property type="match status" value="1"/>
</dbReference>
<dbReference type="SUPFAM" id="SSF53098">
    <property type="entry name" value="Ribonuclease H-like"/>
    <property type="match status" value="1"/>
</dbReference>
<dbReference type="PROSITE" id="PS51975">
    <property type="entry name" value="RNASE_H_2"/>
    <property type="match status" value="1"/>
</dbReference>
<sequence>MKRSASDSPLLFDLPLAPDFSQEQQLMKRGLKHIAGIDEAGRGPLAGPVVAAAVVLDQNDLPEGLDDSKRLTAARREALYEIILTKAITVSVASLSARSIDASDIRKAALEAMRRAVIGLTLKPCHALVDGRDVPPGLPCPGSALVKGDQRSVSIAAASIVAKVTRDRMMIRAGAAHPPYGLEIHAGYATQKHRAAIESEGPVPGLHRYTFAPIKGRFDC</sequence>
<feature type="chain" id="PRO_1000194444" description="Ribonuclease HII">
    <location>
        <begin position="1"/>
        <end position="220"/>
    </location>
</feature>
<feature type="domain" description="RNase H type-2" evidence="2">
    <location>
        <begin position="32"/>
        <end position="220"/>
    </location>
</feature>
<feature type="binding site" evidence="1">
    <location>
        <position position="38"/>
    </location>
    <ligand>
        <name>a divalent metal cation</name>
        <dbReference type="ChEBI" id="CHEBI:60240"/>
    </ligand>
</feature>
<feature type="binding site" evidence="1">
    <location>
        <position position="39"/>
    </location>
    <ligand>
        <name>a divalent metal cation</name>
        <dbReference type="ChEBI" id="CHEBI:60240"/>
    </ligand>
</feature>
<feature type="binding site" evidence="1">
    <location>
        <position position="130"/>
    </location>
    <ligand>
        <name>a divalent metal cation</name>
        <dbReference type="ChEBI" id="CHEBI:60240"/>
    </ligand>
</feature>
<gene>
    <name evidence="1" type="primary">rnhB</name>
    <name type="ordered locus">BMEA_A0420</name>
</gene>
<evidence type="ECO:0000255" key="1">
    <source>
        <dbReference type="HAMAP-Rule" id="MF_00052"/>
    </source>
</evidence>
<evidence type="ECO:0000255" key="2">
    <source>
        <dbReference type="PROSITE-ProRule" id="PRU01319"/>
    </source>
</evidence>
<comment type="function">
    <text evidence="1">Endonuclease that specifically degrades the RNA of RNA-DNA hybrids.</text>
</comment>
<comment type="catalytic activity">
    <reaction evidence="1">
        <text>Endonucleolytic cleavage to 5'-phosphomonoester.</text>
        <dbReference type="EC" id="3.1.26.4"/>
    </reaction>
</comment>
<comment type="cofactor">
    <cofactor evidence="1">
        <name>Mn(2+)</name>
        <dbReference type="ChEBI" id="CHEBI:29035"/>
    </cofactor>
    <cofactor evidence="1">
        <name>Mg(2+)</name>
        <dbReference type="ChEBI" id="CHEBI:18420"/>
    </cofactor>
    <text evidence="1">Manganese or magnesium. Binds 1 divalent metal ion per monomer in the absence of substrate. May bind a second metal ion after substrate binding.</text>
</comment>
<comment type="subcellular location">
    <subcellularLocation>
        <location evidence="1">Cytoplasm</location>
    </subcellularLocation>
</comment>
<comment type="similarity">
    <text evidence="1">Belongs to the RNase HII family.</text>
</comment>
<name>RNH2_BRUMB</name>
<reference key="1">
    <citation type="submission" date="2009-03" db="EMBL/GenBank/DDBJ databases">
        <title>Brucella melitensis ATCC 23457 whole genome shotgun sequencing project.</title>
        <authorList>
            <person name="Setubal J.C."/>
            <person name="Boyle S."/>
            <person name="Crasta O.R."/>
            <person name="Gillespie J.J."/>
            <person name="Kenyon R.W."/>
            <person name="Lu J."/>
            <person name="Mane S."/>
            <person name="Nagrani S."/>
            <person name="Shallom J.M."/>
            <person name="Shallom S."/>
            <person name="Shukla M."/>
            <person name="Snyder E.E."/>
            <person name="Sobral B.W."/>
            <person name="Wattam A.R."/>
            <person name="Will R."/>
            <person name="Williams K."/>
            <person name="Yoo H."/>
            <person name="Munk C."/>
            <person name="Tapia R."/>
            <person name="Han C."/>
            <person name="Detter J.C."/>
            <person name="Bruce D."/>
            <person name="Brettin T.S."/>
        </authorList>
    </citation>
    <scope>NUCLEOTIDE SEQUENCE [LARGE SCALE GENOMIC DNA]</scope>
    <source>
        <strain>ATCC 23457</strain>
    </source>
</reference>